<feature type="chain" id="PRO_1000073675" description="Membrane protein insertase YidC">
    <location>
        <begin position="1"/>
        <end position="541"/>
    </location>
</feature>
<feature type="transmembrane region" description="Helical" evidence="1">
    <location>
        <begin position="6"/>
        <end position="26"/>
    </location>
</feature>
<feature type="transmembrane region" description="Helical" evidence="1">
    <location>
        <begin position="343"/>
        <end position="363"/>
    </location>
</feature>
<feature type="transmembrane region" description="Helical" evidence="1">
    <location>
        <begin position="418"/>
        <end position="438"/>
    </location>
</feature>
<feature type="transmembrane region" description="Helical" evidence="1">
    <location>
        <begin position="456"/>
        <end position="476"/>
    </location>
</feature>
<feature type="transmembrane region" description="Helical" evidence="1">
    <location>
        <begin position="497"/>
        <end position="517"/>
    </location>
</feature>
<feature type="region of interest" description="Disordered" evidence="2">
    <location>
        <begin position="31"/>
        <end position="55"/>
    </location>
</feature>
<feature type="compositionally biased region" description="Low complexity" evidence="2">
    <location>
        <begin position="31"/>
        <end position="47"/>
    </location>
</feature>
<sequence length="541" mass="60621">MDSQRNILLIALALVSFLLFQQWQVAKNPAPQATQQAQSTGAAPAPSFSDELDPTPAQNVAAKAKTITVSTDVLTLSIDTLGGDVVSAKLNQYSEELNSPESFVLLQNTQGHQFIAQSGLVGPQGIDVTSNNRPAYQVSADSFTLAEGQDELRIPMTYQANGIDYTKTFILKRGSYAVDVVFDVANNSGSEATLGMYAHLRQNLLDSGGNLAMPTYRGGAYSTSDVRYKKYSFDDMKDRNLSAPNDVTVNWVAMIQHYFASAWIPRDEPQAQLYSRVINNLGDMGIRTPNKTIANGDKAEFEATLWVGPKLQDQMAATAPNLDLVVDYGWLWFIAKPLHWLLSVIQTFVGNWGVAIICLTFIVRGAMYPLTKAQYTSMAKMRMLQPKLQAMRERIGDDRQRMSQEMMELYKKEKVNPLGGCLPILLQMPIFIALYWALMESVELRHSPFFGWIHDLSAQDPYYILPLLMGASMFVIQKMSPTTITDPMQQKIMTFMPVMFTFFFLWFPSGLVLYWLVSNIVTLIQQTLIYKALEKKGLHSK</sequence>
<keyword id="KW-0997">Cell inner membrane</keyword>
<keyword id="KW-1003">Cell membrane</keyword>
<keyword id="KW-0143">Chaperone</keyword>
<keyword id="KW-0472">Membrane</keyword>
<keyword id="KW-0653">Protein transport</keyword>
<keyword id="KW-0812">Transmembrane</keyword>
<keyword id="KW-1133">Transmembrane helix</keyword>
<keyword id="KW-0813">Transport</keyword>
<evidence type="ECO:0000255" key="1">
    <source>
        <dbReference type="HAMAP-Rule" id="MF_01810"/>
    </source>
</evidence>
<evidence type="ECO:0000256" key="2">
    <source>
        <dbReference type="SAM" id="MobiDB-lite"/>
    </source>
</evidence>
<reference key="1">
    <citation type="submission" date="2007-03" db="EMBL/GenBank/DDBJ databases">
        <authorList>
            <person name="Heidelberg J."/>
        </authorList>
    </citation>
    <scope>NUCLEOTIDE SEQUENCE [LARGE SCALE GENOMIC DNA]</scope>
    <source>
        <strain>ATCC 39541 / Classical Ogawa 395 / O395</strain>
    </source>
</reference>
<reference key="2">
    <citation type="journal article" date="2008" name="PLoS ONE">
        <title>A recalibrated molecular clock and independent origins for the cholera pandemic clones.</title>
        <authorList>
            <person name="Feng L."/>
            <person name="Reeves P.R."/>
            <person name="Lan R."/>
            <person name="Ren Y."/>
            <person name="Gao C."/>
            <person name="Zhou Z."/>
            <person name="Ren Y."/>
            <person name="Cheng J."/>
            <person name="Wang W."/>
            <person name="Wang J."/>
            <person name="Qian W."/>
            <person name="Li D."/>
            <person name="Wang L."/>
        </authorList>
    </citation>
    <scope>NUCLEOTIDE SEQUENCE [LARGE SCALE GENOMIC DNA]</scope>
    <source>
        <strain>ATCC 39541 / Classical Ogawa 395 / O395</strain>
    </source>
</reference>
<name>YIDC_VIBC3</name>
<accession>A5F484</accession>
<accession>C3M324</accession>
<organism>
    <name type="scientific">Vibrio cholerae serotype O1 (strain ATCC 39541 / Classical Ogawa 395 / O395)</name>
    <dbReference type="NCBI Taxonomy" id="345073"/>
    <lineage>
        <taxon>Bacteria</taxon>
        <taxon>Pseudomonadati</taxon>
        <taxon>Pseudomonadota</taxon>
        <taxon>Gammaproteobacteria</taxon>
        <taxon>Vibrionales</taxon>
        <taxon>Vibrionaceae</taxon>
        <taxon>Vibrio</taxon>
    </lineage>
</organism>
<proteinExistence type="inferred from homology"/>
<protein>
    <recommendedName>
        <fullName evidence="1">Membrane protein insertase YidC</fullName>
    </recommendedName>
    <alternativeName>
        <fullName evidence="1">Foldase YidC</fullName>
    </alternativeName>
    <alternativeName>
        <fullName evidence="1">Membrane integrase YidC</fullName>
    </alternativeName>
    <alternativeName>
        <fullName evidence="1">Membrane protein YidC</fullName>
    </alternativeName>
</protein>
<dbReference type="EMBL" id="CP000627">
    <property type="protein sequence ID" value="ABQ20694.1"/>
    <property type="molecule type" value="Genomic_DNA"/>
</dbReference>
<dbReference type="EMBL" id="CP001235">
    <property type="protein sequence ID" value="ACP08203.1"/>
    <property type="molecule type" value="Genomic_DNA"/>
</dbReference>
<dbReference type="RefSeq" id="WP_000378235.1">
    <property type="nucleotide sequence ID" value="NZ_JAACZH010000018.1"/>
</dbReference>
<dbReference type="SMR" id="A5F484"/>
<dbReference type="KEGG" id="vco:VC0395_A2514"/>
<dbReference type="KEGG" id="vcr:VC395_0176"/>
<dbReference type="PATRIC" id="fig|345073.21.peg.166"/>
<dbReference type="eggNOG" id="COG0706">
    <property type="taxonomic scope" value="Bacteria"/>
</dbReference>
<dbReference type="HOGENOM" id="CLU_016535_3_0_6"/>
<dbReference type="OrthoDB" id="9780552at2"/>
<dbReference type="Proteomes" id="UP000000249">
    <property type="component" value="Chromosome 2"/>
</dbReference>
<dbReference type="GO" id="GO:0005886">
    <property type="term" value="C:plasma membrane"/>
    <property type="evidence" value="ECO:0007669"/>
    <property type="project" value="UniProtKB-SubCell"/>
</dbReference>
<dbReference type="GO" id="GO:0032977">
    <property type="term" value="F:membrane insertase activity"/>
    <property type="evidence" value="ECO:0007669"/>
    <property type="project" value="InterPro"/>
</dbReference>
<dbReference type="GO" id="GO:0051205">
    <property type="term" value="P:protein insertion into membrane"/>
    <property type="evidence" value="ECO:0007669"/>
    <property type="project" value="TreeGrafter"/>
</dbReference>
<dbReference type="GO" id="GO:0015031">
    <property type="term" value="P:protein transport"/>
    <property type="evidence" value="ECO:0007669"/>
    <property type="project" value="UniProtKB-KW"/>
</dbReference>
<dbReference type="CDD" id="cd20070">
    <property type="entry name" value="5TM_YidC_Alb3"/>
    <property type="match status" value="1"/>
</dbReference>
<dbReference type="CDD" id="cd19961">
    <property type="entry name" value="EcYidC-like_peri"/>
    <property type="match status" value="1"/>
</dbReference>
<dbReference type="FunFam" id="2.70.98.90:FF:000001">
    <property type="entry name" value="Membrane protein insertase YidC"/>
    <property type="match status" value="1"/>
</dbReference>
<dbReference type="Gene3D" id="2.70.98.90">
    <property type="match status" value="1"/>
</dbReference>
<dbReference type="HAMAP" id="MF_01810">
    <property type="entry name" value="YidC_type1"/>
    <property type="match status" value="1"/>
</dbReference>
<dbReference type="InterPro" id="IPR019998">
    <property type="entry name" value="Membr_insert_YidC"/>
</dbReference>
<dbReference type="InterPro" id="IPR028053">
    <property type="entry name" value="Membr_insert_YidC_N"/>
</dbReference>
<dbReference type="InterPro" id="IPR001708">
    <property type="entry name" value="YidC/ALB3/OXA1/COX18"/>
</dbReference>
<dbReference type="InterPro" id="IPR028055">
    <property type="entry name" value="YidC/Oxa/ALB_C"/>
</dbReference>
<dbReference type="InterPro" id="IPR047196">
    <property type="entry name" value="YidC_ALB_C"/>
</dbReference>
<dbReference type="InterPro" id="IPR038221">
    <property type="entry name" value="YidC_periplasmic_sf"/>
</dbReference>
<dbReference type="NCBIfam" id="NF002351">
    <property type="entry name" value="PRK01318.1-1"/>
    <property type="match status" value="1"/>
</dbReference>
<dbReference type="NCBIfam" id="NF002352">
    <property type="entry name" value="PRK01318.1-3"/>
    <property type="match status" value="1"/>
</dbReference>
<dbReference type="NCBIfam" id="TIGR03593">
    <property type="entry name" value="yidC_nterm"/>
    <property type="match status" value="1"/>
</dbReference>
<dbReference type="NCBIfam" id="TIGR03592">
    <property type="entry name" value="yidC_oxa1_cterm"/>
    <property type="match status" value="1"/>
</dbReference>
<dbReference type="PANTHER" id="PTHR12428:SF65">
    <property type="entry name" value="CYTOCHROME C OXIDASE ASSEMBLY PROTEIN COX18, MITOCHONDRIAL"/>
    <property type="match status" value="1"/>
</dbReference>
<dbReference type="PANTHER" id="PTHR12428">
    <property type="entry name" value="OXA1"/>
    <property type="match status" value="1"/>
</dbReference>
<dbReference type="Pfam" id="PF02096">
    <property type="entry name" value="60KD_IMP"/>
    <property type="match status" value="1"/>
</dbReference>
<dbReference type="Pfam" id="PF14849">
    <property type="entry name" value="YidC_periplas"/>
    <property type="match status" value="1"/>
</dbReference>
<dbReference type="PRINTS" id="PR00701">
    <property type="entry name" value="60KDINNERMP"/>
</dbReference>
<dbReference type="PRINTS" id="PR01900">
    <property type="entry name" value="YIDCPROTEIN"/>
</dbReference>
<comment type="function">
    <text evidence="1">Required for the insertion and/or proper folding and/or complex formation of integral membrane proteins into the membrane. Involved in integration of membrane proteins that insert both dependently and independently of the Sec translocase complex, as well as at least some lipoproteins. Aids folding of multispanning membrane proteins.</text>
</comment>
<comment type="subunit">
    <text evidence="1">Interacts with the Sec translocase complex via SecD. Specifically interacts with transmembrane segments of nascent integral membrane proteins during membrane integration.</text>
</comment>
<comment type="subcellular location">
    <subcellularLocation>
        <location evidence="1">Cell inner membrane</location>
        <topology evidence="1">Multi-pass membrane protein</topology>
    </subcellularLocation>
</comment>
<comment type="similarity">
    <text evidence="1">Belongs to the OXA1/ALB3/YidC family. Type 1 subfamily.</text>
</comment>
<gene>
    <name evidence="1" type="primary">yidC</name>
    <name type="ordered locus">VC0395_A2514</name>
    <name type="ordered locus">VC395_0176</name>
</gene>